<reference key="1">
    <citation type="journal article" date="2008" name="J. Bacteriol.">
        <title>The complete genome sequence of Escherichia coli DH10B: insights into the biology of a laboratory workhorse.</title>
        <authorList>
            <person name="Durfee T."/>
            <person name="Nelson R."/>
            <person name="Baldwin S."/>
            <person name="Plunkett G. III"/>
            <person name="Burland V."/>
            <person name="Mau B."/>
            <person name="Petrosino J.F."/>
            <person name="Qin X."/>
            <person name="Muzny D.M."/>
            <person name="Ayele M."/>
            <person name="Gibbs R.A."/>
            <person name="Csorgo B."/>
            <person name="Posfai G."/>
            <person name="Weinstock G.M."/>
            <person name="Blattner F.R."/>
        </authorList>
    </citation>
    <scope>NUCLEOTIDE SEQUENCE [LARGE SCALE GENOMIC DNA]</scope>
    <source>
        <strain>K12 / DH10B</strain>
    </source>
</reference>
<proteinExistence type="inferred from homology"/>
<feature type="chain" id="PRO_1000121322" description="GTPase Era">
    <location>
        <begin position="1"/>
        <end position="301"/>
    </location>
</feature>
<feature type="domain" description="Era-type G" evidence="2">
    <location>
        <begin position="7"/>
        <end position="175"/>
    </location>
</feature>
<feature type="domain" description="KH type-2" evidence="1">
    <location>
        <begin position="206"/>
        <end position="283"/>
    </location>
</feature>
<feature type="region of interest" description="G1" evidence="2">
    <location>
        <begin position="15"/>
        <end position="22"/>
    </location>
</feature>
<feature type="region of interest" description="G2" evidence="2">
    <location>
        <begin position="41"/>
        <end position="45"/>
    </location>
</feature>
<feature type="region of interest" description="G3" evidence="2">
    <location>
        <begin position="62"/>
        <end position="65"/>
    </location>
</feature>
<feature type="region of interest" description="G4" evidence="2">
    <location>
        <begin position="124"/>
        <end position="127"/>
    </location>
</feature>
<feature type="region of interest" description="G5" evidence="2">
    <location>
        <begin position="154"/>
        <end position="156"/>
    </location>
</feature>
<feature type="binding site" evidence="1">
    <location>
        <begin position="15"/>
        <end position="22"/>
    </location>
    <ligand>
        <name>GTP</name>
        <dbReference type="ChEBI" id="CHEBI:37565"/>
    </ligand>
</feature>
<feature type="binding site" evidence="1">
    <location>
        <begin position="62"/>
        <end position="66"/>
    </location>
    <ligand>
        <name>GTP</name>
        <dbReference type="ChEBI" id="CHEBI:37565"/>
    </ligand>
</feature>
<feature type="binding site" evidence="1">
    <location>
        <begin position="124"/>
        <end position="127"/>
    </location>
    <ligand>
        <name>GTP</name>
        <dbReference type="ChEBI" id="CHEBI:37565"/>
    </ligand>
</feature>
<gene>
    <name evidence="1" type="primary">era</name>
    <name type="ordered locus">ECDH10B_2734</name>
</gene>
<protein>
    <recommendedName>
        <fullName evidence="1">GTPase Era</fullName>
    </recommendedName>
</protein>
<sequence>MSIDKSYCGFIAIVGRPNVGKSTLLNKLLGQKISITSRKAQTTRHRIVGIHTEGAYQAIYVDTPGLHMEEKRAINRLMNKAASSSIGDVELVIFVVEGTRWTPDDEMVLNKLREGKAPVILAVNKVDNVQEKADLLPHLQFLASQMNFLDIVPISAETGLNVDTIAAIVRKHLPEATHHFPEDYITDRSQRFMASEIIREKLMRFLGAELPYSVTVEIERFVSNERGGYDINGLILVEREGQKKMVIGNKGAKIKTIGIEARKDMQEMFEAPVHLELWVKVKSGWADDERALRSLGYVDDL</sequence>
<accession>B1XB40</accession>
<comment type="function">
    <text evidence="1">An essential GTPase that binds both GDP and GTP, with rapid nucleotide exchange. Plays a role in 16S rRNA processing and 30S ribosomal subunit biogenesis and possibly also in cell cycle regulation and energy metabolism.</text>
</comment>
<comment type="subunit">
    <text evidence="1">Monomer.</text>
</comment>
<comment type="subcellular location">
    <subcellularLocation>
        <location>Cytoplasm</location>
    </subcellularLocation>
    <subcellularLocation>
        <location evidence="1">Cell inner membrane</location>
        <topology evidence="1">Peripheral membrane protein</topology>
    </subcellularLocation>
</comment>
<comment type="similarity">
    <text evidence="1 2">Belongs to the TRAFAC class TrmE-Era-EngA-EngB-Septin-like GTPase superfamily. Era GTPase family.</text>
</comment>
<name>ERA_ECODH</name>
<keyword id="KW-0997">Cell inner membrane</keyword>
<keyword id="KW-1003">Cell membrane</keyword>
<keyword id="KW-0963">Cytoplasm</keyword>
<keyword id="KW-0342">GTP-binding</keyword>
<keyword id="KW-0472">Membrane</keyword>
<keyword id="KW-0547">Nucleotide-binding</keyword>
<keyword id="KW-0690">Ribosome biogenesis</keyword>
<keyword id="KW-0694">RNA-binding</keyword>
<keyword id="KW-0699">rRNA-binding</keyword>
<dbReference type="EMBL" id="CP000948">
    <property type="protein sequence ID" value="ACB03717.1"/>
    <property type="molecule type" value="Genomic_DNA"/>
</dbReference>
<dbReference type="RefSeq" id="WP_000020749.1">
    <property type="nucleotide sequence ID" value="NC_010473.1"/>
</dbReference>
<dbReference type="SMR" id="B1XB40"/>
<dbReference type="GeneID" id="75172680"/>
<dbReference type="KEGG" id="ecd:ECDH10B_2734"/>
<dbReference type="HOGENOM" id="CLU_038009_1_2_6"/>
<dbReference type="GO" id="GO:0005829">
    <property type="term" value="C:cytosol"/>
    <property type="evidence" value="ECO:0007669"/>
    <property type="project" value="TreeGrafter"/>
</dbReference>
<dbReference type="GO" id="GO:0005886">
    <property type="term" value="C:plasma membrane"/>
    <property type="evidence" value="ECO:0007669"/>
    <property type="project" value="UniProtKB-SubCell"/>
</dbReference>
<dbReference type="GO" id="GO:0005525">
    <property type="term" value="F:GTP binding"/>
    <property type="evidence" value="ECO:0007669"/>
    <property type="project" value="UniProtKB-UniRule"/>
</dbReference>
<dbReference type="GO" id="GO:0003924">
    <property type="term" value="F:GTPase activity"/>
    <property type="evidence" value="ECO:0007669"/>
    <property type="project" value="UniProtKB-UniRule"/>
</dbReference>
<dbReference type="GO" id="GO:0043024">
    <property type="term" value="F:ribosomal small subunit binding"/>
    <property type="evidence" value="ECO:0007669"/>
    <property type="project" value="TreeGrafter"/>
</dbReference>
<dbReference type="GO" id="GO:0070181">
    <property type="term" value="F:small ribosomal subunit rRNA binding"/>
    <property type="evidence" value="ECO:0007669"/>
    <property type="project" value="UniProtKB-UniRule"/>
</dbReference>
<dbReference type="GO" id="GO:0000028">
    <property type="term" value="P:ribosomal small subunit assembly"/>
    <property type="evidence" value="ECO:0007669"/>
    <property type="project" value="TreeGrafter"/>
</dbReference>
<dbReference type="CDD" id="cd04163">
    <property type="entry name" value="Era"/>
    <property type="match status" value="1"/>
</dbReference>
<dbReference type="CDD" id="cd22534">
    <property type="entry name" value="KH-II_Era"/>
    <property type="match status" value="1"/>
</dbReference>
<dbReference type="FunFam" id="3.30.300.20:FF:000003">
    <property type="entry name" value="GTPase Era"/>
    <property type="match status" value="1"/>
</dbReference>
<dbReference type="FunFam" id="3.40.50.300:FF:000094">
    <property type="entry name" value="GTPase Era"/>
    <property type="match status" value="1"/>
</dbReference>
<dbReference type="Gene3D" id="3.30.300.20">
    <property type="match status" value="1"/>
</dbReference>
<dbReference type="Gene3D" id="3.40.50.300">
    <property type="entry name" value="P-loop containing nucleotide triphosphate hydrolases"/>
    <property type="match status" value="1"/>
</dbReference>
<dbReference type="HAMAP" id="MF_00367">
    <property type="entry name" value="GTPase_Era"/>
    <property type="match status" value="1"/>
</dbReference>
<dbReference type="InterPro" id="IPR030388">
    <property type="entry name" value="G_ERA_dom"/>
</dbReference>
<dbReference type="InterPro" id="IPR006073">
    <property type="entry name" value="GTP-bd"/>
</dbReference>
<dbReference type="InterPro" id="IPR005662">
    <property type="entry name" value="GTPase_Era-like"/>
</dbReference>
<dbReference type="InterPro" id="IPR015946">
    <property type="entry name" value="KH_dom-like_a/b"/>
</dbReference>
<dbReference type="InterPro" id="IPR004044">
    <property type="entry name" value="KH_dom_type_2"/>
</dbReference>
<dbReference type="InterPro" id="IPR009019">
    <property type="entry name" value="KH_sf_prok-type"/>
</dbReference>
<dbReference type="InterPro" id="IPR027417">
    <property type="entry name" value="P-loop_NTPase"/>
</dbReference>
<dbReference type="InterPro" id="IPR005225">
    <property type="entry name" value="Small_GTP-bd"/>
</dbReference>
<dbReference type="NCBIfam" id="TIGR00436">
    <property type="entry name" value="era"/>
    <property type="match status" value="1"/>
</dbReference>
<dbReference type="NCBIfam" id="NF000908">
    <property type="entry name" value="PRK00089.1"/>
    <property type="match status" value="1"/>
</dbReference>
<dbReference type="NCBIfam" id="TIGR00231">
    <property type="entry name" value="small_GTP"/>
    <property type="match status" value="1"/>
</dbReference>
<dbReference type="PANTHER" id="PTHR42698">
    <property type="entry name" value="GTPASE ERA"/>
    <property type="match status" value="1"/>
</dbReference>
<dbReference type="PANTHER" id="PTHR42698:SF1">
    <property type="entry name" value="GTPASE ERA, MITOCHONDRIAL"/>
    <property type="match status" value="1"/>
</dbReference>
<dbReference type="Pfam" id="PF07650">
    <property type="entry name" value="KH_2"/>
    <property type="match status" value="1"/>
</dbReference>
<dbReference type="Pfam" id="PF01926">
    <property type="entry name" value="MMR_HSR1"/>
    <property type="match status" value="1"/>
</dbReference>
<dbReference type="SUPFAM" id="SSF52540">
    <property type="entry name" value="P-loop containing nucleoside triphosphate hydrolases"/>
    <property type="match status" value="1"/>
</dbReference>
<dbReference type="SUPFAM" id="SSF54814">
    <property type="entry name" value="Prokaryotic type KH domain (KH-domain type II)"/>
    <property type="match status" value="1"/>
</dbReference>
<dbReference type="PROSITE" id="PS51713">
    <property type="entry name" value="G_ERA"/>
    <property type="match status" value="1"/>
</dbReference>
<dbReference type="PROSITE" id="PS50823">
    <property type="entry name" value="KH_TYPE_2"/>
    <property type="match status" value="1"/>
</dbReference>
<organism>
    <name type="scientific">Escherichia coli (strain K12 / DH10B)</name>
    <dbReference type="NCBI Taxonomy" id="316385"/>
    <lineage>
        <taxon>Bacteria</taxon>
        <taxon>Pseudomonadati</taxon>
        <taxon>Pseudomonadota</taxon>
        <taxon>Gammaproteobacteria</taxon>
        <taxon>Enterobacterales</taxon>
        <taxon>Enterobacteriaceae</taxon>
        <taxon>Escherichia</taxon>
    </lineage>
</organism>
<evidence type="ECO:0000255" key="1">
    <source>
        <dbReference type="HAMAP-Rule" id="MF_00367"/>
    </source>
</evidence>
<evidence type="ECO:0000255" key="2">
    <source>
        <dbReference type="PROSITE-ProRule" id="PRU01050"/>
    </source>
</evidence>